<name>ZFP34_ARATH</name>
<protein>
    <recommendedName>
        <fullName evidence="10">E3 ubiquitin-protein ligase RZFP34</fullName>
        <ecNumber evidence="7">2.3.2.27</ecNumber>
    </recommendedName>
    <alternativeName>
        <fullName evidence="9">CHY zinc-finger and RING protein 1</fullName>
    </alternativeName>
    <alternativeName>
        <fullName evidence="10">RING zinc-finger protein 34</fullName>
    </alternativeName>
    <alternativeName>
        <fullName evidence="8">RZFP34 protein homolog</fullName>
        <shortName evidence="8">AtRZPF34</shortName>
    </alternativeName>
</protein>
<feature type="chain" id="PRO_0000440630" description="E3 ubiquitin-protein ligase RZFP34">
    <location>
        <begin position="1"/>
        <end position="291"/>
    </location>
</feature>
<feature type="zinc finger region" description="CHY-type" evidence="2">
    <location>
        <begin position="20"/>
        <end position="96"/>
    </location>
</feature>
<feature type="zinc finger region" description="CTCHY-type" evidence="3">
    <location>
        <begin position="98"/>
        <end position="162"/>
    </location>
</feature>
<feature type="zinc finger region" description="RING-type; atypical" evidence="1">
    <location>
        <begin position="163"/>
        <end position="206"/>
    </location>
</feature>
<feature type="region of interest" description="Disordered" evidence="4">
    <location>
        <begin position="271"/>
        <end position="291"/>
    </location>
</feature>
<feature type="binding site" evidence="2">
    <location>
        <position position="27"/>
    </location>
    <ligand>
        <name>Zn(2+)</name>
        <dbReference type="ChEBI" id="CHEBI:29105"/>
        <label>1</label>
    </ligand>
</feature>
<feature type="binding site" evidence="2">
    <location>
        <position position="29"/>
    </location>
    <ligand>
        <name>Zn(2+)</name>
        <dbReference type="ChEBI" id="CHEBI:29105"/>
        <label>1</label>
    </ligand>
</feature>
<feature type="binding site" evidence="2">
    <location>
        <position position="40"/>
    </location>
    <ligand>
        <name>Zn(2+)</name>
        <dbReference type="ChEBI" id="CHEBI:29105"/>
        <label>2</label>
    </ligand>
</feature>
<feature type="binding site" evidence="2">
    <location>
        <position position="41"/>
    </location>
    <ligand>
        <name>Zn(2+)</name>
        <dbReference type="ChEBI" id="CHEBI:29105"/>
        <label>2</label>
    </ligand>
</feature>
<feature type="binding site" evidence="2">
    <location>
        <position position="47"/>
    </location>
    <ligand>
        <name>Zn(2+)</name>
        <dbReference type="ChEBI" id="CHEBI:29105"/>
        <label>1</label>
    </ligand>
</feature>
<feature type="binding site" evidence="2">
    <location>
        <position position="50"/>
    </location>
    <ligand>
        <name>Zn(2+)</name>
        <dbReference type="ChEBI" id="CHEBI:29105"/>
        <label>1</label>
    </ligand>
</feature>
<feature type="binding site" evidence="2">
    <location>
        <position position="51"/>
    </location>
    <ligand>
        <name>Zn(2+)</name>
        <dbReference type="ChEBI" id="CHEBI:29105"/>
        <label>2</label>
    </ligand>
</feature>
<feature type="binding site" evidence="2">
    <location>
        <position position="66"/>
    </location>
    <ligand>
        <name>Zn(2+)</name>
        <dbReference type="ChEBI" id="CHEBI:29105"/>
        <label>2</label>
    </ligand>
</feature>
<feature type="binding site" evidence="2">
    <location>
        <position position="78"/>
    </location>
    <ligand>
        <name>Zn(2+)</name>
        <dbReference type="ChEBI" id="CHEBI:29105"/>
        <label>3</label>
    </ligand>
</feature>
<feature type="binding site" evidence="2">
    <location>
        <position position="81"/>
    </location>
    <ligand>
        <name>Zn(2+)</name>
        <dbReference type="ChEBI" id="CHEBI:29105"/>
        <label>3</label>
    </ligand>
</feature>
<feature type="binding site" evidence="2">
    <location>
        <position position="91"/>
    </location>
    <ligand>
        <name>Zn(2+)</name>
        <dbReference type="ChEBI" id="CHEBI:29105"/>
        <label>3</label>
    </ligand>
</feature>
<feature type="binding site" evidence="2">
    <location>
        <position position="94"/>
    </location>
    <ligand>
        <name>Zn(2+)</name>
        <dbReference type="ChEBI" id="CHEBI:29105"/>
        <label>3</label>
    </ligand>
</feature>
<feature type="binding site" evidence="3">
    <location>
        <position position="103"/>
    </location>
    <ligand>
        <name>Zn(2+)</name>
        <dbReference type="ChEBI" id="CHEBI:29105"/>
        <label>4</label>
    </ligand>
</feature>
<feature type="binding site" evidence="3">
    <location>
        <position position="106"/>
    </location>
    <ligand>
        <name>Zn(2+)</name>
        <dbReference type="ChEBI" id="CHEBI:29105"/>
        <label>4</label>
    </ligand>
</feature>
<feature type="binding site" evidence="3">
    <location>
        <position position="119"/>
    </location>
    <ligand>
        <name>Zn(2+)</name>
        <dbReference type="ChEBI" id="CHEBI:29105"/>
        <label>4</label>
    </ligand>
</feature>
<feature type="binding site" evidence="3">
    <location>
        <position position="120"/>
    </location>
    <ligand>
        <name>Zn(2+)</name>
        <dbReference type="ChEBI" id="CHEBI:29105"/>
        <label>5</label>
    </ligand>
</feature>
<feature type="binding site" evidence="3">
    <location>
        <position position="123"/>
    </location>
    <ligand>
        <name>Zn(2+)</name>
        <dbReference type="ChEBI" id="CHEBI:29105"/>
        <label>5</label>
    </ligand>
</feature>
<feature type="binding site" evidence="3">
    <location>
        <position position="126"/>
    </location>
    <ligand>
        <name>Zn(2+)</name>
        <dbReference type="ChEBI" id="CHEBI:29105"/>
        <label>4</label>
    </ligand>
</feature>
<feature type="binding site" evidence="3">
    <location>
        <position position="136"/>
    </location>
    <ligand>
        <name>Zn(2+)</name>
        <dbReference type="ChEBI" id="CHEBI:29105"/>
        <label>5</label>
    </ligand>
</feature>
<feature type="binding site" evidence="3">
    <location>
        <position position="137"/>
    </location>
    <ligand>
        <name>Zn(2+)</name>
        <dbReference type="ChEBI" id="CHEBI:29105"/>
        <label>6</label>
    </ligand>
</feature>
<feature type="binding site" evidence="3">
    <location>
        <position position="140"/>
    </location>
    <ligand>
        <name>Zn(2+)</name>
        <dbReference type="ChEBI" id="CHEBI:29105"/>
        <label>6</label>
    </ligand>
</feature>
<feature type="binding site" evidence="3">
    <location>
        <position position="143"/>
    </location>
    <ligand>
        <name>Zn(2+)</name>
        <dbReference type="ChEBI" id="CHEBI:29105"/>
        <label>5</label>
    </ligand>
</feature>
<feature type="binding site" evidence="3">
    <location>
        <position position="152"/>
    </location>
    <ligand>
        <name>Zn(2+)</name>
        <dbReference type="ChEBI" id="CHEBI:29105"/>
        <label>6</label>
    </ligand>
</feature>
<feature type="binding site" evidence="3">
    <location>
        <position position="154"/>
    </location>
    <ligand>
        <name>Zn(2+)</name>
        <dbReference type="ChEBI" id="CHEBI:29105"/>
        <label>6</label>
    </ligand>
</feature>
<feature type="modified residue" description="Phosphoserine" evidence="7">
    <location>
        <position position="173"/>
    </location>
</feature>
<feature type="modified residue" description="Phosphothreonine" evidence="7">
    <location>
        <position position="178"/>
    </location>
</feature>
<feature type="modified residue" description="Phosphoserine" evidence="7">
    <location>
        <position position="208"/>
    </location>
</feature>
<feature type="mutagenesis site" description="Abolishes E3 ubiquitin-protein ligase activity; when associated with Y-184 and Y-187." evidence="7">
    <original>C</original>
    <variation>S</variation>
    <location>
        <position position="182"/>
    </location>
</feature>
<feature type="mutagenesis site" description="Abolishes E3 ubiquitin-protein ligase activity; when associated with Y-184 and Y-187." evidence="7">
    <original>H</original>
    <variation>Y</variation>
    <location>
        <position position="184"/>
    </location>
</feature>
<feature type="mutagenesis site" description="Abolishes E3 ubiquitin-protein ligase activity; when associated with Y-184 and Y-187." evidence="7">
    <original>H</original>
    <variation>Y</variation>
    <location>
        <position position="187"/>
    </location>
</feature>
<feature type="sequence conflict" description="In Ref. 5; AAM65683." evidence="10" ref="5">
    <original>M</original>
    <variation>L</variation>
    <location>
        <position position="231"/>
    </location>
</feature>
<comment type="function">
    <text evidence="6 7">Possesses E3 ubiquitin-protein ligase activity in vitro. Mediates mainly 'Lys-48'-linked polyubiquitination. Promotes abscisic acid (ABA)-induced stomatal closure, reactive oxygen species (ROS) production and drought tolerance (PubMed:26508764). Involved in the regulation of stomatal aperture (PubMed:25002225).</text>
</comment>
<comment type="catalytic activity">
    <reaction evidence="7">
        <text>S-ubiquitinyl-[E2 ubiquitin-conjugating enzyme]-L-cysteine + [acceptor protein]-L-lysine = [E2 ubiquitin-conjugating enzyme]-L-cysteine + N(6)-ubiquitinyl-[acceptor protein]-L-lysine.</text>
        <dbReference type="EC" id="2.3.2.27"/>
    </reaction>
</comment>
<comment type="pathway">
    <text evidence="10">Protein modification; protein ubiquitination.</text>
</comment>
<comment type="subunit">
    <text evidence="7">Interacts with SRK2D/2SNRK2.2, SRK2I/SNRK2.3 and SRK2E/SNRK2.6.</text>
</comment>
<comment type="subcellular location">
    <subcellularLocation>
        <location evidence="7">Nucleus</location>
    </subcellularLocation>
    <subcellularLocation>
        <location evidence="7">Cytoplasm</location>
    </subcellularLocation>
    <subcellularLocation>
        <location evidence="7">Endoplasmic reticulum</location>
    </subcellularLocation>
</comment>
<comment type="tissue specificity">
    <text evidence="7">Expressed in roots, leaves, and anthers and stigma of open flowers.</text>
</comment>
<comment type="induction">
    <text evidence="5 7">Induced during sucrose starvation. Repressed by sucrose (PubMed:17217462). Induced by cold, drought and salt stresses, and abscisic acid (ABA) (PubMed:26508764).</text>
</comment>
<comment type="PTM">
    <text evidence="7">Phosphorylated at Ser-173, Thr-178 and Ser-208 by SRK2E/SNRK2.6 in response to abscisic acid (ABA). Phosphorylation activates its E3 ubiquitin-protein ligase activity.</text>
</comment>
<comment type="disruption phenotype">
    <text evidence="6 7">Decreased relative stomata aperture under normal growth conditions (PubMed:25002225). No visible phenotype under normal growth conditions, but mutant plants display decreased sensitivity to abscisic acid (ABA) during seed germination (PubMed:26508764).</text>
</comment>
<comment type="sequence caution" evidence="10">
    <conflict type="erroneous initiation">
        <sequence resource="EMBL-CDS" id="AAM65683"/>
    </conflict>
    <text>Truncated N-terminus.</text>
</comment>
<sequence>MDMGFHENEQNQEFANLMEIGSGHYGCSHYRRRCKIRAPCCDEIFDCRHCHNEAKDSLHIEQHHRHELPRHEVSKVICSLCETEQDVQQNCSNCGVCMGKYFCSKCKFFDDDLSKKQYHCDECGICRTGGEENFFHCKRCRCCYSKIMEDKHQCVEGAMHHNCPVCFEYLFDSTRDITVLRCGHTMHLECTKDMGLHNRYTCPVCSKSICDMSNLWKKLDEEVAAYPMPKMYENKMVWILCNDCGSNTNVRFHLIAHKCSSCGSYNTRQTQRGSDSHSCSSGMPQVVGSTG</sequence>
<dbReference type="EC" id="2.3.2.27" evidence="7"/>
<dbReference type="EMBL" id="DQ059131">
    <property type="protein sequence ID" value="AAY57617.1"/>
    <property type="molecule type" value="mRNA"/>
</dbReference>
<dbReference type="EMBL" id="AB005243">
    <property type="protein sequence ID" value="BAB10613.1"/>
    <property type="molecule type" value="Genomic_DNA"/>
</dbReference>
<dbReference type="EMBL" id="CP002688">
    <property type="protein sequence ID" value="AED93097.1"/>
    <property type="molecule type" value="Genomic_DNA"/>
</dbReference>
<dbReference type="EMBL" id="AY052362">
    <property type="protein sequence ID" value="AAK96553.1"/>
    <property type="molecule type" value="mRNA"/>
</dbReference>
<dbReference type="EMBL" id="BT002635">
    <property type="protein sequence ID" value="AAO11551.1"/>
    <property type="molecule type" value="mRNA"/>
</dbReference>
<dbReference type="EMBL" id="AY088138">
    <property type="protein sequence ID" value="AAM65683.1"/>
    <property type="status" value="ALT_INIT"/>
    <property type="molecule type" value="mRNA"/>
</dbReference>
<dbReference type="RefSeq" id="NP_197683.1">
    <property type="nucleotide sequence ID" value="NM_122198.3"/>
</dbReference>
<dbReference type="SMR" id="Q9FFB6"/>
<dbReference type="FunCoup" id="Q9FFB6">
    <property type="interactions" value="2599"/>
</dbReference>
<dbReference type="STRING" id="3702.Q9FFB6"/>
<dbReference type="iPTMnet" id="Q9FFB6"/>
<dbReference type="PaxDb" id="3702-AT5G22920.1"/>
<dbReference type="ProteomicsDB" id="242948"/>
<dbReference type="EnsemblPlants" id="AT5G22920.1">
    <property type="protein sequence ID" value="AT5G22920.1"/>
    <property type="gene ID" value="AT5G22920"/>
</dbReference>
<dbReference type="GeneID" id="832356"/>
<dbReference type="Gramene" id="AT5G22920.1">
    <property type="protein sequence ID" value="AT5G22920.1"/>
    <property type="gene ID" value="AT5G22920"/>
</dbReference>
<dbReference type="KEGG" id="ath:AT5G22920"/>
<dbReference type="Araport" id="AT5G22920"/>
<dbReference type="TAIR" id="AT5G22920">
    <property type="gene designation" value="RZPF34"/>
</dbReference>
<dbReference type="eggNOG" id="KOG1940">
    <property type="taxonomic scope" value="Eukaryota"/>
</dbReference>
<dbReference type="HOGENOM" id="CLU_013368_1_1_1"/>
<dbReference type="InParanoid" id="Q9FFB6"/>
<dbReference type="OMA" id="KLYPCRL"/>
<dbReference type="PhylomeDB" id="Q9FFB6"/>
<dbReference type="UniPathway" id="UPA00143"/>
<dbReference type="PRO" id="PR:Q9FFB6"/>
<dbReference type="Proteomes" id="UP000006548">
    <property type="component" value="Chromosome 5"/>
</dbReference>
<dbReference type="ExpressionAtlas" id="Q9FFB6">
    <property type="expression patterns" value="baseline and differential"/>
</dbReference>
<dbReference type="GO" id="GO:0005783">
    <property type="term" value="C:endoplasmic reticulum"/>
    <property type="evidence" value="ECO:0007669"/>
    <property type="project" value="UniProtKB-SubCell"/>
</dbReference>
<dbReference type="GO" id="GO:0005634">
    <property type="term" value="C:nucleus"/>
    <property type="evidence" value="ECO:0007669"/>
    <property type="project" value="UniProtKB-SubCell"/>
</dbReference>
<dbReference type="GO" id="GO:0016740">
    <property type="term" value="F:transferase activity"/>
    <property type="evidence" value="ECO:0007669"/>
    <property type="project" value="UniProtKB-KW"/>
</dbReference>
<dbReference type="GO" id="GO:0008270">
    <property type="term" value="F:zinc ion binding"/>
    <property type="evidence" value="ECO:0007669"/>
    <property type="project" value="UniProtKB-KW"/>
</dbReference>
<dbReference type="GO" id="GO:0016567">
    <property type="term" value="P:protein ubiquitination"/>
    <property type="evidence" value="ECO:0007669"/>
    <property type="project" value="UniProtKB-UniPathway"/>
</dbReference>
<dbReference type="GO" id="GO:1902456">
    <property type="term" value="P:regulation of stomatal opening"/>
    <property type="evidence" value="ECO:0000315"/>
    <property type="project" value="TAIR"/>
</dbReference>
<dbReference type="FunFam" id="3.30.40.10:FF:000937">
    <property type="entry name" value="E3 ubiquitin-protein ligase RZFP34"/>
    <property type="match status" value="1"/>
</dbReference>
<dbReference type="FunFam" id="2.20.28.10:FF:000009">
    <property type="entry name" value="RING finger and CHY zinc finger domain-containing protein 1"/>
    <property type="match status" value="1"/>
</dbReference>
<dbReference type="Gene3D" id="2.20.28.10">
    <property type="match status" value="1"/>
</dbReference>
<dbReference type="Gene3D" id="3.30.40.10">
    <property type="entry name" value="Zinc/RING finger domain, C3HC4 (zinc finger)"/>
    <property type="match status" value="1"/>
</dbReference>
<dbReference type="InterPro" id="IPR039512">
    <property type="entry name" value="RCHY1_zinc-ribbon"/>
</dbReference>
<dbReference type="InterPro" id="IPR008913">
    <property type="entry name" value="Znf_CHY"/>
</dbReference>
<dbReference type="InterPro" id="IPR037274">
    <property type="entry name" value="Znf_CHY_sf"/>
</dbReference>
<dbReference type="InterPro" id="IPR017921">
    <property type="entry name" value="Znf_CTCHY"/>
</dbReference>
<dbReference type="InterPro" id="IPR037275">
    <property type="entry name" value="Znf_CTCHY_sf"/>
</dbReference>
<dbReference type="InterPro" id="IPR001841">
    <property type="entry name" value="Znf_RING"/>
</dbReference>
<dbReference type="InterPro" id="IPR013083">
    <property type="entry name" value="Znf_RING/FYVE/PHD"/>
</dbReference>
<dbReference type="PANTHER" id="PTHR21319:SF58">
    <property type="entry name" value="E3 UBIQUITIN-PROTEIN LIGASE RZFP34"/>
    <property type="match status" value="1"/>
</dbReference>
<dbReference type="PANTHER" id="PTHR21319">
    <property type="entry name" value="RING FINGER AND CHY ZINC FINGER DOMAIN-CONTAINING PROTEIN 1"/>
    <property type="match status" value="1"/>
</dbReference>
<dbReference type="Pfam" id="PF05495">
    <property type="entry name" value="zf-CHY"/>
    <property type="match status" value="1"/>
</dbReference>
<dbReference type="Pfam" id="PF14634">
    <property type="entry name" value="zf-RING_5"/>
    <property type="match status" value="1"/>
</dbReference>
<dbReference type="Pfam" id="PF14599">
    <property type="entry name" value="zinc_ribbon_6"/>
    <property type="match status" value="1"/>
</dbReference>
<dbReference type="SMART" id="SM00184">
    <property type="entry name" value="RING"/>
    <property type="match status" value="1"/>
</dbReference>
<dbReference type="SUPFAM" id="SSF161219">
    <property type="entry name" value="CHY zinc finger-like"/>
    <property type="match status" value="1"/>
</dbReference>
<dbReference type="SUPFAM" id="SSF57850">
    <property type="entry name" value="RING/U-box"/>
    <property type="match status" value="1"/>
</dbReference>
<dbReference type="SUPFAM" id="SSF161245">
    <property type="entry name" value="Zinc hairpin stack"/>
    <property type="match status" value="1"/>
</dbReference>
<dbReference type="PROSITE" id="PS51266">
    <property type="entry name" value="ZF_CHY"/>
    <property type="match status" value="1"/>
</dbReference>
<dbReference type="PROSITE" id="PS51270">
    <property type="entry name" value="ZF_CTCHY"/>
    <property type="match status" value="1"/>
</dbReference>
<dbReference type="PROSITE" id="PS50089">
    <property type="entry name" value="ZF_RING_2"/>
    <property type="match status" value="1"/>
</dbReference>
<evidence type="ECO:0000255" key="1">
    <source>
        <dbReference type="PROSITE-ProRule" id="PRU00175"/>
    </source>
</evidence>
<evidence type="ECO:0000255" key="2">
    <source>
        <dbReference type="PROSITE-ProRule" id="PRU00601"/>
    </source>
</evidence>
<evidence type="ECO:0000255" key="3">
    <source>
        <dbReference type="PROSITE-ProRule" id="PRU00965"/>
    </source>
</evidence>
<evidence type="ECO:0000256" key="4">
    <source>
        <dbReference type="SAM" id="MobiDB-lite"/>
    </source>
</evidence>
<evidence type="ECO:0000269" key="5">
    <source>
    </source>
</evidence>
<evidence type="ECO:0000269" key="6">
    <source>
    </source>
</evidence>
<evidence type="ECO:0000269" key="7">
    <source>
    </source>
</evidence>
<evidence type="ECO:0000303" key="8">
    <source>
    </source>
</evidence>
<evidence type="ECO:0000303" key="9">
    <source>
    </source>
</evidence>
<evidence type="ECO:0000305" key="10"/>
<evidence type="ECO:0000312" key="11">
    <source>
        <dbReference type="Araport" id="AT5G22920"/>
    </source>
</evidence>
<evidence type="ECO:0000312" key="12">
    <source>
        <dbReference type="EMBL" id="BAB10613.1"/>
    </source>
</evidence>
<reference key="1">
    <citation type="journal article" date="2005" name="Plant Physiol.">
        <title>Functional analysis of the RING-type ubiquitin ligase family of Arabidopsis.</title>
        <authorList>
            <person name="Stone S.L."/>
            <person name="Hauksdottir H."/>
            <person name="Troy A."/>
            <person name="Herschleb J."/>
            <person name="Kraft E."/>
            <person name="Callis J."/>
        </authorList>
    </citation>
    <scope>NUCLEOTIDE SEQUENCE [MRNA]</scope>
    <source>
        <strain>cv. Columbia</strain>
        <tissue>Leaf</tissue>
    </source>
</reference>
<reference key="2">
    <citation type="journal article" date="1997" name="DNA Res.">
        <title>Structural analysis of Arabidopsis thaliana chromosome 5. I. Sequence features of the 1.6 Mb regions covered by twenty physically assigned P1 clones.</title>
        <authorList>
            <person name="Sato S."/>
            <person name="Kotani H."/>
            <person name="Nakamura Y."/>
            <person name="Kaneko T."/>
            <person name="Asamizu E."/>
            <person name="Fukami M."/>
            <person name="Miyajima N."/>
            <person name="Tabata S."/>
        </authorList>
    </citation>
    <scope>NUCLEOTIDE SEQUENCE [LARGE SCALE GENOMIC DNA]</scope>
    <source>
        <strain>cv. Columbia</strain>
    </source>
</reference>
<reference key="3">
    <citation type="journal article" date="2017" name="Plant J.">
        <title>Araport11: a complete reannotation of the Arabidopsis thaliana reference genome.</title>
        <authorList>
            <person name="Cheng C.Y."/>
            <person name="Krishnakumar V."/>
            <person name="Chan A.P."/>
            <person name="Thibaud-Nissen F."/>
            <person name="Schobel S."/>
            <person name="Town C.D."/>
        </authorList>
    </citation>
    <scope>GENOME REANNOTATION</scope>
    <source>
        <strain>cv. Columbia</strain>
    </source>
</reference>
<reference key="4">
    <citation type="journal article" date="2003" name="Science">
        <title>Empirical analysis of transcriptional activity in the Arabidopsis genome.</title>
        <authorList>
            <person name="Yamada K."/>
            <person name="Lim J."/>
            <person name="Dale J.M."/>
            <person name="Chen H."/>
            <person name="Shinn P."/>
            <person name="Palm C.J."/>
            <person name="Southwick A.M."/>
            <person name="Wu H.C."/>
            <person name="Kim C.J."/>
            <person name="Nguyen M."/>
            <person name="Pham P.K."/>
            <person name="Cheuk R.F."/>
            <person name="Karlin-Newmann G."/>
            <person name="Liu S.X."/>
            <person name="Lam B."/>
            <person name="Sakano H."/>
            <person name="Wu T."/>
            <person name="Yu G."/>
            <person name="Miranda M."/>
            <person name="Quach H.L."/>
            <person name="Tripp M."/>
            <person name="Chang C.H."/>
            <person name="Lee J.M."/>
            <person name="Toriumi M.J."/>
            <person name="Chan M.M."/>
            <person name="Tang C.C."/>
            <person name="Onodera C.S."/>
            <person name="Deng J.M."/>
            <person name="Akiyama K."/>
            <person name="Ansari Y."/>
            <person name="Arakawa T."/>
            <person name="Banh J."/>
            <person name="Banno F."/>
            <person name="Bowser L."/>
            <person name="Brooks S.Y."/>
            <person name="Carninci P."/>
            <person name="Chao Q."/>
            <person name="Choy N."/>
            <person name="Enju A."/>
            <person name="Goldsmith A.D."/>
            <person name="Gurjal M."/>
            <person name="Hansen N.F."/>
            <person name="Hayashizaki Y."/>
            <person name="Johnson-Hopson C."/>
            <person name="Hsuan V.W."/>
            <person name="Iida K."/>
            <person name="Karnes M."/>
            <person name="Khan S."/>
            <person name="Koesema E."/>
            <person name="Ishida J."/>
            <person name="Jiang P.X."/>
            <person name="Jones T."/>
            <person name="Kawai J."/>
            <person name="Kamiya A."/>
            <person name="Meyers C."/>
            <person name="Nakajima M."/>
            <person name="Narusaka M."/>
            <person name="Seki M."/>
            <person name="Sakurai T."/>
            <person name="Satou M."/>
            <person name="Tamse R."/>
            <person name="Vaysberg M."/>
            <person name="Wallender E.K."/>
            <person name="Wong C."/>
            <person name="Yamamura Y."/>
            <person name="Yuan S."/>
            <person name="Shinozaki K."/>
            <person name="Davis R.W."/>
            <person name="Theologis A."/>
            <person name="Ecker J.R."/>
        </authorList>
    </citation>
    <scope>NUCLEOTIDE SEQUENCE [LARGE SCALE MRNA]</scope>
    <source>
        <strain>cv. Columbia</strain>
    </source>
</reference>
<reference key="5">
    <citation type="submission" date="2002-03" db="EMBL/GenBank/DDBJ databases">
        <title>Full-length cDNA from Arabidopsis thaliana.</title>
        <authorList>
            <person name="Brover V.V."/>
            <person name="Troukhan M.E."/>
            <person name="Alexandrov N.A."/>
            <person name="Lu Y.-P."/>
            <person name="Flavell R.B."/>
            <person name="Feldmann K.A."/>
        </authorList>
    </citation>
    <scope>NUCLEOTIDE SEQUENCE [LARGE SCALE MRNA]</scope>
</reference>
<reference key="6">
    <citation type="journal article" date="2007" name="Plant J.">
        <title>Temporal responses of transcripts, enzyme activities and metabolites after adding sucrose to carbon-deprived Arabidopsis seedlings.</title>
        <authorList>
            <person name="Osuna D."/>
            <person name="Usadel B."/>
            <person name="Morcuende R."/>
            <person name="Gibon Y."/>
            <person name="Blaesing O.E."/>
            <person name="Hoehne M."/>
            <person name="Guenter M."/>
            <person name="Kamlage B."/>
            <person name="Trethewey R."/>
            <person name="Scheible W.R."/>
            <person name="Stitt M."/>
        </authorList>
    </citation>
    <scope>INDUCTION</scope>
</reference>
<reference key="7">
    <citation type="journal article" date="2014" name="Plant Mol. Biol.">
        <title>Expression of a gene encoding a rice RING zinc-finger protein, OsRZFP34, enhances stomata opening.</title>
        <authorList>
            <person name="Hsu K.H."/>
            <person name="Liu C.C."/>
            <person name="Wu S.J."/>
            <person name="Kuo Y.Y."/>
            <person name="Lu C.A."/>
            <person name="Wu C.R."/>
            <person name="Lian P.J."/>
            <person name="Hong C.Y."/>
            <person name="Ke Y.T."/>
            <person name="Huang J.H."/>
            <person name="Yeh C.H."/>
        </authorList>
    </citation>
    <scope>FUNCTION</scope>
    <scope>DISRUPTION PHENOTYPE</scope>
</reference>
<reference key="8">
    <citation type="journal article" date="2015" name="Plant Cell">
        <title>Arabidopsis RZFP34/CHYR1, a ubiquitin E3 ligase, regulates stomatal movement and drought tolerance via SnRK2.6-mediated phosphorylation.</title>
        <authorList>
            <person name="Ding S."/>
            <person name="Zhang B."/>
            <person name="Qin F."/>
        </authorList>
    </citation>
    <scope>FUNCTION</scope>
    <scope>CATALYTIC ACTIVITY</scope>
    <scope>INTERACTION WITH SRK2D/2SNRK2.2; SRK2I/SNRK2.3 AND SRK2E/SNRK2.6</scope>
    <scope>SUBCELLULAR LOCATION</scope>
    <scope>TISSUE SPECIFICITY</scope>
    <scope>INDUCTION</scope>
    <scope>PHOSPHORYLATION AT SER-173; THR-178 AND SER-208</scope>
    <scope>MUTAGENESIS OF CYS-182; HIS-184 AND HIS-187</scope>
</reference>
<accession>Q9FFB6</accession>
<accession>Q8L9Y9</accession>
<proteinExistence type="evidence at protein level"/>
<gene>
    <name evidence="8" type="primary">RZPF34</name>
    <name evidence="9" type="synonym">CHYR1</name>
    <name evidence="11" type="ordered locus">At5g22920</name>
    <name evidence="12" type="ORF">MRN17.15</name>
</gene>
<organism>
    <name type="scientific">Arabidopsis thaliana</name>
    <name type="common">Mouse-ear cress</name>
    <dbReference type="NCBI Taxonomy" id="3702"/>
    <lineage>
        <taxon>Eukaryota</taxon>
        <taxon>Viridiplantae</taxon>
        <taxon>Streptophyta</taxon>
        <taxon>Embryophyta</taxon>
        <taxon>Tracheophyta</taxon>
        <taxon>Spermatophyta</taxon>
        <taxon>Magnoliopsida</taxon>
        <taxon>eudicotyledons</taxon>
        <taxon>Gunneridae</taxon>
        <taxon>Pentapetalae</taxon>
        <taxon>rosids</taxon>
        <taxon>malvids</taxon>
        <taxon>Brassicales</taxon>
        <taxon>Brassicaceae</taxon>
        <taxon>Camelineae</taxon>
        <taxon>Arabidopsis</taxon>
    </lineage>
</organism>
<keyword id="KW-0963">Cytoplasm</keyword>
<keyword id="KW-0256">Endoplasmic reticulum</keyword>
<keyword id="KW-0479">Metal-binding</keyword>
<keyword id="KW-0539">Nucleus</keyword>
<keyword id="KW-0597">Phosphoprotein</keyword>
<keyword id="KW-1185">Reference proteome</keyword>
<keyword id="KW-0346">Stress response</keyword>
<keyword id="KW-0808">Transferase</keyword>
<keyword id="KW-0833">Ubl conjugation pathway</keyword>
<keyword id="KW-0862">Zinc</keyword>
<keyword id="KW-0863">Zinc-finger</keyword>